<reference key="1">
    <citation type="journal article" date="2007" name="PLoS Genet.">
        <title>Meningococcal genetic variation mechanisms viewed through comparative analysis of serogroup C strain FAM18.</title>
        <authorList>
            <person name="Bentley S.D."/>
            <person name="Vernikos G.S."/>
            <person name="Snyder L.A.S."/>
            <person name="Churcher C."/>
            <person name="Arrowsmith C."/>
            <person name="Chillingworth T."/>
            <person name="Cronin A."/>
            <person name="Davis P.H."/>
            <person name="Holroyd N.E."/>
            <person name="Jagels K."/>
            <person name="Maddison M."/>
            <person name="Moule S."/>
            <person name="Rabbinowitsch E."/>
            <person name="Sharp S."/>
            <person name="Unwin L."/>
            <person name="Whitehead S."/>
            <person name="Quail M.A."/>
            <person name="Achtman M."/>
            <person name="Barrell B.G."/>
            <person name="Saunders N.J."/>
            <person name="Parkhill J."/>
        </authorList>
    </citation>
    <scope>NUCLEOTIDE SEQUENCE [LARGE SCALE GENOMIC DNA]</scope>
    <source>
        <strain>ATCC 700532 / DSM 15464 / FAM18</strain>
    </source>
</reference>
<feature type="chain" id="PRO_1000021213" description="Recombination-associated protein RdgC">
    <location>
        <begin position="1"/>
        <end position="299"/>
    </location>
</feature>
<gene>
    <name evidence="1" type="primary">rdgC</name>
    <name type="ordered locus">NMC0791</name>
</gene>
<name>RDGC_NEIMF</name>
<proteinExistence type="inferred from homology"/>
<accession>A1KT92</accession>
<organism>
    <name type="scientific">Neisseria meningitidis serogroup C / serotype 2a (strain ATCC 700532 / DSM 15464 / FAM18)</name>
    <dbReference type="NCBI Taxonomy" id="272831"/>
    <lineage>
        <taxon>Bacteria</taxon>
        <taxon>Pseudomonadati</taxon>
        <taxon>Pseudomonadota</taxon>
        <taxon>Betaproteobacteria</taxon>
        <taxon>Neisseriales</taxon>
        <taxon>Neisseriaceae</taxon>
        <taxon>Neisseria</taxon>
    </lineage>
</organism>
<comment type="function">
    <text evidence="1">May be involved in recombination.</text>
</comment>
<comment type="subcellular location">
    <subcellularLocation>
        <location evidence="1">Cytoplasm</location>
        <location evidence="1">Nucleoid</location>
    </subcellularLocation>
</comment>
<comment type="similarity">
    <text evidence="1">Belongs to the RdgC family.</text>
</comment>
<sequence>MWFKQISFYPLNKEKLPEADVLADKLAEAEFTHCQGLDWFSEGFTAPVSFSPELVFPADFTLRVALKKEEKVLPAGVIRDILEEKVAEIQNNEARNVGRKEKQELKEQITDDLLPRAFTRSSRTEAVFNTRHGYLLVNNAASAKAENILTKLREALGGLEASLPNTKQSPSSLMTGWLLQGHCEGGFELDSDCELKGTGDIVPVVKVSKQDLTADEVVQHVKNGKTVTQLGLVWREQIAFILTQDFTLKRIQYLDVLQEEAESNGDDAAGLAFASQILMAESVSTMLEELVSYLGGWQD</sequence>
<protein>
    <recommendedName>
        <fullName evidence="1">Recombination-associated protein RdgC</fullName>
    </recommendedName>
</protein>
<dbReference type="EMBL" id="AM421808">
    <property type="protein sequence ID" value="CAM10075.1"/>
    <property type="molecule type" value="Genomic_DNA"/>
</dbReference>
<dbReference type="RefSeq" id="WP_002219474.1">
    <property type="nucleotide sequence ID" value="NC_008767.1"/>
</dbReference>
<dbReference type="SMR" id="A1KT92"/>
<dbReference type="KEGG" id="nmc:NMC0791"/>
<dbReference type="HOGENOM" id="CLU_052038_0_0_4"/>
<dbReference type="Proteomes" id="UP000002286">
    <property type="component" value="Chromosome"/>
</dbReference>
<dbReference type="GO" id="GO:0005737">
    <property type="term" value="C:cytoplasm"/>
    <property type="evidence" value="ECO:0007669"/>
    <property type="project" value="UniProtKB-UniRule"/>
</dbReference>
<dbReference type="GO" id="GO:0009295">
    <property type="term" value="C:nucleoid"/>
    <property type="evidence" value="ECO:0007669"/>
    <property type="project" value="UniProtKB-SubCell"/>
</dbReference>
<dbReference type="GO" id="GO:0006310">
    <property type="term" value="P:DNA recombination"/>
    <property type="evidence" value="ECO:0007669"/>
    <property type="project" value="UniProtKB-UniRule"/>
</dbReference>
<dbReference type="HAMAP" id="MF_00194">
    <property type="entry name" value="RdgC"/>
    <property type="match status" value="1"/>
</dbReference>
<dbReference type="InterPro" id="IPR007476">
    <property type="entry name" value="RdgC"/>
</dbReference>
<dbReference type="NCBIfam" id="NF001464">
    <property type="entry name" value="PRK00321.1-5"/>
    <property type="match status" value="1"/>
</dbReference>
<dbReference type="PANTHER" id="PTHR38103">
    <property type="entry name" value="RECOMBINATION-ASSOCIATED PROTEIN RDGC"/>
    <property type="match status" value="1"/>
</dbReference>
<dbReference type="PANTHER" id="PTHR38103:SF1">
    <property type="entry name" value="RECOMBINATION-ASSOCIATED PROTEIN RDGC"/>
    <property type="match status" value="1"/>
</dbReference>
<dbReference type="Pfam" id="PF04381">
    <property type="entry name" value="RdgC"/>
    <property type="match status" value="1"/>
</dbReference>
<keyword id="KW-0963">Cytoplasm</keyword>
<keyword id="KW-0233">DNA recombination</keyword>
<evidence type="ECO:0000255" key="1">
    <source>
        <dbReference type="HAMAP-Rule" id="MF_00194"/>
    </source>
</evidence>